<feature type="chain" id="PRO_1000193348" description="DNA repair protein RecO">
    <location>
        <begin position="1"/>
        <end position="234"/>
    </location>
</feature>
<protein>
    <recommendedName>
        <fullName evidence="1">DNA repair protein RecO</fullName>
    </recommendedName>
    <alternativeName>
        <fullName evidence="1">Recombination protein O</fullName>
    </alternativeName>
</protein>
<dbReference type="EMBL" id="CP001103">
    <property type="protein sequence ID" value="AEA96953.1"/>
    <property type="molecule type" value="Genomic_DNA"/>
</dbReference>
<dbReference type="RefSeq" id="WP_012517307.1">
    <property type="nucleotide sequence ID" value="NC_011138.3"/>
</dbReference>
<dbReference type="SMR" id="B4RXN1"/>
<dbReference type="GeneID" id="56341281"/>
<dbReference type="KEGG" id="amc:MADE_1004025"/>
<dbReference type="HOGENOM" id="CLU_066645_1_0_6"/>
<dbReference type="Proteomes" id="UP000001870">
    <property type="component" value="Chromosome"/>
</dbReference>
<dbReference type="GO" id="GO:0043590">
    <property type="term" value="C:bacterial nucleoid"/>
    <property type="evidence" value="ECO:0007669"/>
    <property type="project" value="TreeGrafter"/>
</dbReference>
<dbReference type="GO" id="GO:0006310">
    <property type="term" value="P:DNA recombination"/>
    <property type="evidence" value="ECO:0007669"/>
    <property type="project" value="UniProtKB-UniRule"/>
</dbReference>
<dbReference type="GO" id="GO:0006302">
    <property type="term" value="P:double-strand break repair"/>
    <property type="evidence" value="ECO:0007669"/>
    <property type="project" value="TreeGrafter"/>
</dbReference>
<dbReference type="Gene3D" id="2.40.50.140">
    <property type="entry name" value="Nucleic acid-binding proteins"/>
    <property type="match status" value="1"/>
</dbReference>
<dbReference type="Gene3D" id="1.20.1440.120">
    <property type="entry name" value="Recombination protein O, C-terminal domain"/>
    <property type="match status" value="1"/>
</dbReference>
<dbReference type="HAMAP" id="MF_00201">
    <property type="entry name" value="RecO"/>
    <property type="match status" value="1"/>
</dbReference>
<dbReference type="InterPro" id="IPR037278">
    <property type="entry name" value="ARFGAP/RecO"/>
</dbReference>
<dbReference type="InterPro" id="IPR022572">
    <property type="entry name" value="DNA_rep/recomb_RecO_N"/>
</dbReference>
<dbReference type="InterPro" id="IPR012340">
    <property type="entry name" value="NA-bd_OB-fold"/>
</dbReference>
<dbReference type="InterPro" id="IPR003717">
    <property type="entry name" value="RecO"/>
</dbReference>
<dbReference type="InterPro" id="IPR042242">
    <property type="entry name" value="RecO_C"/>
</dbReference>
<dbReference type="NCBIfam" id="TIGR00613">
    <property type="entry name" value="reco"/>
    <property type="match status" value="1"/>
</dbReference>
<dbReference type="PANTHER" id="PTHR33991">
    <property type="entry name" value="DNA REPAIR PROTEIN RECO"/>
    <property type="match status" value="1"/>
</dbReference>
<dbReference type="PANTHER" id="PTHR33991:SF1">
    <property type="entry name" value="DNA REPAIR PROTEIN RECO"/>
    <property type="match status" value="1"/>
</dbReference>
<dbReference type="Pfam" id="PF02565">
    <property type="entry name" value="RecO_C"/>
    <property type="match status" value="1"/>
</dbReference>
<dbReference type="Pfam" id="PF11967">
    <property type="entry name" value="RecO_N"/>
    <property type="match status" value="1"/>
</dbReference>
<dbReference type="SUPFAM" id="SSF57863">
    <property type="entry name" value="ArfGap/RecO-like zinc finger"/>
    <property type="match status" value="1"/>
</dbReference>
<dbReference type="SUPFAM" id="SSF50249">
    <property type="entry name" value="Nucleic acid-binding proteins"/>
    <property type="match status" value="1"/>
</dbReference>
<evidence type="ECO:0000255" key="1">
    <source>
        <dbReference type="HAMAP-Rule" id="MF_00201"/>
    </source>
</evidence>
<comment type="function">
    <text evidence="1">Involved in DNA repair and RecF pathway recombination.</text>
</comment>
<comment type="similarity">
    <text evidence="1">Belongs to the RecO family.</text>
</comment>
<gene>
    <name evidence="1" type="primary">recO</name>
    <name type="ordered locus">MADE_1004025</name>
</gene>
<proteinExistence type="inferred from homology"/>
<accession>B4RXN1</accession>
<accession>F2GA26</accession>
<keyword id="KW-0227">DNA damage</keyword>
<keyword id="KW-0233">DNA recombination</keyword>
<keyword id="KW-0234">DNA repair</keyword>
<reference key="1">
    <citation type="journal article" date="2008" name="ISME J.">
        <title>Comparative genomics of two ecotypes of the marine planktonic copiotroph Alteromonas macleodii suggests alternative lifestyles associated with different kinds of particulate organic matter.</title>
        <authorList>
            <person name="Ivars-Martinez E."/>
            <person name="Martin-Cuadrado A.-B."/>
            <person name="D'Auria G."/>
            <person name="Mira A."/>
            <person name="Ferriera S."/>
            <person name="Johnson J."/>
            <person name="Friedman R."/>
            <person name="Rodriguez-Valera F."/>
        </authorList>
    </citation>
    <scope>NUCLEOTIDE SEQUENCE [LARGE SCALE GENOMIC DNA]</scope>
    <source>
        <strain>DSM 17117 / CIP 110805 / LMG 28347 / Deep ecotype</strain>
    </source>
</reference>
<name>RECO_ALTMD</name>
<organism>
    <name type="scientific">Alteromonas mediterranea (strain DSM 17117 / CIP 110805 / LMG 28347 / Deep ecotype)</name>
    <dbReference type="NCBI Taxonomy" id="1774373"/>
    <lineage>
        <taxon>Bacteria</taxon>
        <taxon>Pseudomonadati</taxon>
        <taxon>Pseudomonadota</taxon>
        <taxon>Gammaproteobacteria</taxon>
        <taxon>Alteromonadales</taxon>
        <taxon>Alteromonadaceae</taxon>
        <taxon>Alteromonas/Salinimonas group</taxon>
        <taxon>Alteromonas</taxon>
    </lineage>
</organism>
<sequence length="234" mass="26265">MNNEWLNAYVLHRRPYRETSYIVDFFSLEEGRISAVAKGVKNSKSDKKSLLQPFQHLRLQLSGKSDLKNLRHVESVAPSISLTGTALFCAMYVNELTNRIMPQGLASDGVYSAYEAALLALRDEADIEVTLRQLEFALLDEMGLLPDFTSDVEYEMPIEENGRYHFQLDAGFIQIPDDVVGARGIPGTALLSLSQGEFTPLSKKVAKVLCRDLLKPLIGDKPLKSRELFMTKPR</sequence>